<evidence type="ECO:0000250" key="1"/>
<evidence type="ECO:0000255" key="2"/>
<evidence type="ECO:0000305" key="3"/>
<feature type="signal peptide" evidence="2">
    <location>
        <begin position="1"/>
        <end position="22"/>
    </location>
</feature>
<feature type="chain" id="PRO_0000394941" description="Probable feruloyl esterase C">
    <location>
        <begin position="23"/>
        <end position="270"/>
    </location>
</feature>
<organism>
    <name type="scientific">Aspergillus terreus (strain NIH 2624 / FGSC A1156)</name>
    <dbReference type="NCBI Taxonomy" id="341663"/>
    <lineage>
        <taxon>Eukaryota</taxon>
        <taxon>Fungi</taxon>
        <taxon>Dikarya</taxon>
        <taxon>Ascomycota</taxon>
        <taxon>Pezizomycotina</taxon>
        <taxon>Eurotiomycetes</taxon>
        <taxon>Eurotiomycetidae</taxon>
        <taxon>Eurotiales</taxon>
        <taxon>Aspergillaceae</taxon>
        <taxon>Aspergillus</taxon>
        <taxon>Aspergillus subgen. Circumdati</taxon>
    </lineage>
</organism>
<gene>
    <name type="primary">faeC</name>
    <name type="ORF">ATEG_08112</name>
</gene>
<comment type="function">
    <text evidence="1">Involved in degradation of plant cell walls. Hydrolyzes the feruloyl-arabinose ester bond in arabinoxylans, and the feruloyl-galactose ester bond in pectin. Active against paranitrophenyl-acetate, methyl ferulate and wheat arabinoxylan (By similarity).</text>
</comment>
<comment type="catalytic activity">
    <reaction>
        <text>feruloyl-polysaccharide + H2O = ferulate + polysaccharide.</text>
        <dbReference type="EC" id="3.1.1.73"/>
    </reaction>
</comment>
<comment type="subcellular location">
    <subcellularLocation>
        <location evidence="1">Secreted</location>
    </subcellularLocation>
</comment>
<comment type="similarity">
    <text evidence="3">Belongs to the faeC family.</text>
</comment>
<protein>
    <recommendedName>
        <fullName>Probable feruloyl esterase C</fullName>
        <ecNumber>3.1.1.73</ecNumber>
    </recommendedName>
    <alternativeName>
        <fullName>Ferulic acid esterase C</fullName>
    </alternativeName>
</protein>
<proteinExistence type="inferred from homology"/>
<dbReference type="EC" id="3.1.1.73"/>
<dbReference type="EMBL" id="CH476605">
    <property type="protein sequence ID" value="EAU31285.1"/>
    <property type="molecule type" value="Genomic_DNA"/>
</dbReference>
<dbReference type="RefSeq" id="XP_001216733.1">
    <property type="nucleotide sequence ID" value="XM_001216733.1"/>
</dbReference>
<dbReference type="SMR" id="Q0CDX2"/>
<dbReference type="STRING" id="341663.Q0CDX2"/>
<dbReference type="ESTHER" id="asptn-faec">
    <property type="family name" value="FaeC"/>
</dbReference>
<dbReference type="EnsemblFungi" id="EAU31285">
    <property type="protein sequence ID" value="EAU31285"/>
    <property type="gene ID" value="ATEG_08112"/>
</dbReference>
<dbReference type="GeneID" id="4353506"/>
<dbReference type="VEuPathDB" id="FungiDB:ATEG_08112"/>
<dbReference type="eggNOG" id="ENOG502SMEI">
    <property type="taxonomic scope" value="Eukaryota"/>
</dbReference>
<dbReference type="HOGENOM" id="CLU_027551_2_0_1"/>
<dbReference type="OMA" id="IHGINDG"/>
<dbReference type="OrthoDB" id="424610at2759"/>
<dbReference type="Proteomes" id="UP000007963">
    <property type="component" value="Unassembled WGS sequence"/>
</dbReference>
<dbReference type="GO" id="GO:0005576">
    <property type="term" value="C:extracellular region"/>
    <property type="evidence" value="ECO:0007669"/>
    <property type="project" value="UniProtKB-SubCell"/>
</dbReference>
<dbReference type="GO" id="GO:0030600">
    <property type="term" value="F:feruloyl esterase activity"/>
    <property type="evidence" value="ECO:0007669"/>
    <property type="project" value="UniProtKB-EC"/>
</dbReference>
<dbReference type="GO" id="GO:0045493">
    <property type="term" value="P:xylan catabolic process"/>
    <property type="evidence" value="ECO:0007669"/>
    <property type="project" value="UniProtKB-KW"/>
</dbReference>
<dbReference type="Gene3D" id="3.40.50.1820">
    <property type="entry name" value="alpha/beta hydrolase"/>
    <property type="match status" value="1"/>
</dbReference>
<dbReference type="InterPro" id="IPR029058">
    <property type="entry name" value="AB_hydrolase_fold"/>
</dbReference>
<dbReference type="InterPro" id="IPR043595">
    <property type="entry name" value="FaeB/C/D"/>
</dbReference>
<dbReference type="PANTHER" id="PTHR38050">
    <property type="match status" value="1"/>
</dbReference>
<dbReference type="PANTHER" id="PTHR38050:SF1">
    <property type="entry name" value="FERULOYL ESTERASE C"/>
    <property type="match status" value="1"/>
</dbReference>
<dbReference type="SUPFAM" id="SSF53474">
    <property type="entry name" value="alpha/beta-Hydrolases"/>
    <property type="match status" value="1"/>
</dbReference>
<sequence>MAILSRLLTTVTLGSLLTSAVAQSSGCGKQPTLTNGVQNINGREYILNIPEGYDSSKQYKLIFGLHWLGGSMNDVVSGNSIEPWYGLESRAEGSAIFVAPNGLNAGWANNGGEDTALMDAIIEAVEADLCIDQSSRFATGFSFGGGMSYALACARASKFRAVSVLSGGVISGCDGGNDPIAYLGIHGINDPVLPIDGGIEMANKFVQNNGCQSADVGRPNSGSGQSVRTDFQGCSRPVSFIAYDGGHEGAPLGVGNPLAPDATWEFFTGA</sequence>
<name>FAEC_ASPTN</name>
<accession>Q0CDX2</accession>
<keyword id="KW-0119">Carbohydrate metabolism</keyword>
<keyword id="KW-0378">Hydrolase</keyword>
<keyword id="KW-0624">Polysaccharide degradation</keyword>
<keyword id="KW-1185">Reference proteome</keyword>
<keyword id="KW-0964">Secreted</keyword>
<keyword id="KW-0719">Serine esterase</keyword>
<keyword id="KW-0732">Signal</keyword>
<keyword id="KW-0858">Xylan degradation</keyword>
<reference key="1">
    <citation type="submission" date="2005-09" db="EMBL/GenBank/DDBJ databases">
        <title>Annotation of the Aspergillus terreus NIH2624 genome.</title>
        <authorList>
            <person name="Birren B.W."/>
            <person name="Lander E.S."/>
            <person name="Galagan J.E."/>
            <person name="Nusbaum C."/>
            <person name="Devon K."/>
            <person name="Henn M."/>
            <person name="Ma L.-J."/>
            <person name="Jaffe D.B."/>
            <person name="Butler J."/>
            <person name="Alvarez P."/>
            <person name="Gnerre S."/>
            <person name="Grabherr M."/>
            <person name="Kleber M."/>
            <person name="Mauceli E.W."/>
            <person name="Brockman W."/>
            <person name="Rounsley S."/>
            <person name="Young S.K."/>
            <person name="LaButti K."/>
            <person name="Pushparaj V."/>
            <person name="DeCaprio D."/>
            <person name="Crawford M."/>
            <person name="Koehrsen M."/>
            <person name="Engels R."/>
            <person name="Montgomery P."/>
            <person name="Pearson M."/>
            <person name="Howarth C."/>
            <person name="Larson L."/>
            <person name="Luoma S."/>
            <person name="White J."/>
            <person name="Alvarado L."/>
            <person name="Kodira C.D."/>
            <person name="Zeng Q."/>
            <person name="Oleary S."/>
            <person name="Yandava C."/>
            <person name="Denning D.W."/>
            <person name="Nierman W.C."/>
            <person name="Milne T."/>
            <person name="Madden K."/>
        </authorList>
    </citation>
    <scope>NUCLEOTIDE SEQUENCE [LARGE SCALE GENOMIC DNA]</scope>
    <source>
        <strain>NIH 2624 / FGSC A1156</strain>
    </source>
</reference>